<reference key="1">
    <citation type="journal article" date="2003" name="Proc. Natl. Acad. Sci. U.S.A.">
        <title>Complete genome sequence and analysis of Wolinella succinogenes.</title>
        <authorList>
            <person name="Baar C."/>
            <person name="Eppinger M."/>
            <person name="Raddatz G."/>
            <person name="Simon J."/>
            <person name="Lanz C."/>
            <person name="Klimmek O."/>
            <person name="Nandakumar R."/>
            <person name="Gross R."/>
            <person name="Rosinus A."/>
            <person name="Keller H."/>
            <person name="Jagtap P."/>
            <person name="Linke B."/>
            <person name="Meyer F."/>
            <person name="Lederer H."/>
            <person name="Schuster S.C."/>
        </authorList>
    </citation>
    <scope>NUCLEOTIDE SEQUENCE [LARGE SCALE GENOMIC DNA]</scope>
    <source>
        <strain>ATCC 29543 / DSM 1740 / CCUG 13145 / JCM 31913 / LMG 7466 / NCTC 11488 / FDC 602W</strain>
    </source>
</reference>
<proteinExistence type="inferred from homology"/>
<name>ATPA_WOLSU</name>
<gene>
    <name evidence="1" type="primary">atpA</name>
    <name type="ordered locus">WS0514</name>
</gene>
<keyword id="KW-0066">ATP synthesis</keyword>
<keyword id="KW-0067">ATP-binding</keyword>
<keyword id="KW-0997">Cell inner membrane</keyword>
<keyword id="KW-1003">Cell membrane</keyword>
<keyword id="KW-0139">CF(1)</keyword>
<keyword id="KW-0375">Hydrogen ion transport</keyword>
<keyword id="KW-0406">Ion transport</keyword>
<keyword id="KW-0472">Membrane</keyword>
<keyword id="KW-0547">Nucleotide-binding</keyword>
<keyword id="KW-1185">Reference proteome</keyword>
<keyword id="KW-1278">Translocase</keyword>
<keyword id="KW-0813">Transport</keyword>
<organism>
    <name type="scientific">Wolinella succinogenes (strain ATCC 29543 / DSM 1740 / CCUG 13145 / JCM 31913 / LMG 7466 / NCTC 11488 / FDC 602W)</name>
    <name type="common">Vibrio succinogenes</name>
    <dbReference type="NCBI Taxonomy" id="273121"/>
    <lineage>
        <taxon>Bacteria</taxon>
        <taxon>Pseudomonadati</taxon>
        <taxon>Campylobacterota</taxon>
        <taxon>Epsilonproteobacteria</taxon>
        <taxon>Campylobacterales</taxon>
        <taxon>Helicobacteraceae</taxon>
        <taxon>Wolinella</taxon>
    </lineage>
</organism>
<sequence>MQADEISSIIKERIDNFELDVNVAETGKVMAFADGVAKVYGLKNVMSYEMVEFDTGDRGLASNLEESSVGVVVLGAGKNIKEGTSVKRLGKLMKVPAGDALMGRVVNGMGEPVDGKGAIETTEYRFVEEKAPGIMQRKSVHEPLQTGLKAIDALVPIGRGQRELIIGDRQTGKTTVAIDTIINQKGQDVVCIYVAIGQKESTVAQVVRKLEEHGAMEYTIIVNAPASDSAAMQFLAPYTGVTMGEYFRDNARHALIIYDDLSKHAVAYREMSLILRRPPGREAFPGDVFYLHSRLLERAAKVSDELGAGSLTALPIIETQAGDVAAYIPTNVISITDGQIFLETDLFNSGVRPAINVGLSVSRVGGAAQIKATKQVAGTLRLDLAQYRELQAFAQFASDLDESSRKQLERGQRMVEILKQPPYAPLPIERQVVVIFAGAKGYMDDISVTKITKFEAELYPFIEAKYPQIFEDIRTKKMIDKETEETLSKALEEFKTVFVA</sequence>
<comment type="function">
    <text evidence="1">Produces ATP from ADP in the presence of a proton gradient across the membrane. The alpha chain is a regulatory subunit.</text>
</comment>
<comment type="catalytic activity">
    <reaction evidence="1">
        <text>ATP + H2O + 4 H(+)(in) = ADP + phosphate + 5 H(+)(out)</text>
        <dbReference type="Rhea" id="RHEA:57720"/>
        <dbReference type="ChEBI" id="CHEBI:15377"/>
        <dbReference type="ChEBI" id="CHEBI:15378"/>
        <dbReference type="ChEBI" id="CHEBI:30616"/>
        <dbReference type="ChEBI" id="CHEBI:43474"/>
        <dbReference type="ChEBI" id="CHEBI:456216"/>
        <dbReference type="EC" id="7.1.2.2"/>
    </reaction>
</comment>
<comment type="subunit">
    <text evidence="1">F-type ATPases have 2 components, CF(1) - the catalytic core - and CF(0) - the membrane proton channel. CF(1) has five subunits: alpha(3), beta(3), gamma(1), delta(1), epsilon(1). CF(0) has three main subunits: a(1), b(2) and c(9-12). The alpha and beta chains form an alternating ring which encloses part of the gamma chain. CF(1) is attached to CF(0) by a central stalk formed by the gamma and epsilon chains, while a peripheral stalk is formed by the delta and b chains.</text>
</comment>
<comment type="subcellular location">
    <subcellularLocation>
        <location evidence="1">Cell inner membrane</location>
        <topology evidence="1">Peripheral membrane protein</topology>
    </subcellularLocation>
</comment>
<comment type="similarity">
    <text evidence="1">Belongs to the ATPase alpha/beta chains family.</text>
</comment>
<protein>
    <recommendedName>
        <fullName evidence="1">ATP synthase subunit alpha</fullName>
        <ecNumber evidence="1">7.1.2.2</ecNumber>
    </recommendedName>
    <alternativeName>
        <fullName evidence="1">ATP synthase F1 sector subunit alpha</fullName>
    </alternativeName>
    <alternativeName>
        <fullName evidence="1">F-ATPase subunit alpha</fullName>
    </alternativeName>
</protein>
<evidence type="ECO:0000255" key="1">
    <source>
        <dbReference type="HAMAP-Rule" id="MF_01346"/>
    </source>
</evidence>
<accession>Q7MA20</accession>
<feature type="chain" id="PRO_0000238401" description="ATP synthase subunit alpha">
    <location>
        <begin position="1"/>
        <end position="500"/>
    </location>
</feature>
<feature type="binding site" evidence="1">
    <location>
        <begin position="167"/>
        <end position="174"/>
    </location>
    <ligand>
        <name>ATP</name>
        <dbReference type="ChEBI" id="CHEBI:30616"/>
    </ligand>
</feature>
<feature type="site" description="Required for activity" evidence="1">
    <location>
        <position position="360"/>
    </location>
</feature>
<dbReference type="EC" id="7.1.2.2" evidence="1"/>
<dbReference type="EMBL" id="BX571658">
    <property type="protein sequence ID" value="CAE09651.1"/>
    <property type="molecule type" value="Genomic_DNA"/>
</dbReference>
<dbReference type="SMR" id="Q7MA20"/>
<dbReference type="STRING" id="273121.WS0514"/>
<dbReference type="KEGG" id="wsu:WS0514"/>
<dbReference type="eggNOG" id="COG0056">
    <property type="taxonomic scope" value="Bacteria"/>
</dbReference>
<dbReference type="HOGENOM" id="CLU_010091_2_1_7"/>
<dbReference type="Proteomes" id="UP000000422">
    <property type="component" value="Chromosome"/>
</dbReference>
<dbReference type="GO" id="GO:0005886">
    <property type="term" value="C:plasma membrane"/>
    <property type="evidence" value="ECO:0007669"/>
    <property type="project" value="UniProtKB-SubCell"/>
</dbReference>
<dbReference type="GO" id="GO:0045259">
    <property type="term" value="C:proton-transporting ATP synthase complex"/>
    <property type="evidence" value="ECO:0007669"/>
    <property type="project" value="UniProtKB-KW"/>
</dbReference>
<dbReference type="GO" id="GO:0043531">
    <property type="term" value="F:ADP binding"/>
    <property type="evidence" value="ECO:0007669"/>
    <property type="project" value="TreeGrafter"/>
</dbReference>
<dbReference type="GO" id="GO:0005524">
    <property type="term" value="F:ATP binding"/>
    <property type="evidence" value="ECO:0007669"/>
    <property type="project" value="UniProtKB-UniRule"/>
</dbReference>
<dbReference type="GO" id="GO:0046933">
    <property type="term" value="F:proton-transporting ATP synthase activity, rotational mechanism"/>
    <property type="evidence" value="ECO:0007669"/>
    <property type="project" value="UniProtKB-UniRule"/>
</dbReference>
<dbReference type="CDD" id="cd18113">
    <property type="entry name" value="ATP-synt_F1_alpha_C"/>
    <property type="match status" value="1"/>
</dbReference>
<dbReference type="CDD" id="cd18116">
    <property type="entry name" value="ATP-synt_F1_alpha_N"/>
    <property type="match status" value="1"/>
</dbReference>
<dbReference type="CDD" id="cd01132">
    <property type="entry name" value="F1-ATPase_alpha_CD"/>
    <property type="match status" value="1"/>
</dbReference>
<dbReference type="FunFam" id="1.20.150.20:FF:000001">
    <property type="entry name" value="ATP synthase subunit alpha"/>
    <property type="match status" value="1"/>
</dbReference>
<dbReference type="FunFam" id="2.40.30.20:FF:000001">
    <property type="entry name" value="ATP synthase subunit alpha"/>
    <property type="match status" value="1"/>
</dbReference>
<dbReference type="FunFam" id="3.40.50.300:FF:000002">
    <property type="entry name" value="ATP synthase subunit alpha"/>
    <property type="match status" value="1"/>
</dbReference>
<dbReference type="Gene3D" id="2.40.30.20">
    <property type="match status" value="1"/>
</dbReference>
<dbReference type="Gene3D" id="1.20.150.20">
    <property type="entry name" value="ATP synthase alpha/beta chain, C-terminal domain"/>
    <property type="match status" value="1"/>
</dbReference>
<dbReference type="Gene3D" id="3.40.50.300">
    <property type="entry name" value="P-loop containing nucleotide triphosphate hydrolases"/>
    <property type="match status" value="1"/>
</dbReference>
<dbReference type="HAMAP" id="MF_01346">
    <property type="entry name" value="ATP_synth_alpha_bact"/>
    <property type="match status" value="1"/>
</dbReference>
<dbReference type="InterPro" id="IPR023366">
    <property type="entry name" value="ATP_synth_asu-like_sf"/>
</dbReference>
<dbReference type="InterPro" id="IPR000793">
    <property type="entry name" value="ATP_synth_asu_C"/>
</dbReference>
<dbReference type="InterPro" id="IPR038376">
    <property type="entry name" value="ATP_synth_asu_C_sf"/>
</dbReference>
<dbReference type="InterPro" id="IPR033732">
    <property type="entry name" value="ATP_synth_F1_a_nt-bd_dom"/>
</dbReference>
<dbReference type="InterPro" id="IPR005294">
    <property type="entry name" value="ATP_synth_F1_asu"/>
</dbReference>
<dbReference type="InterPro" id="IPR020003">
    <property type="entry name" value="ATPase_a/bsu_AS"/>
</dbReference>
<dbReference type="InterPro" id="IPR004100">
    <property type="entry name" value="ATPase_F1/V1/A1_a/bsu_N"/>
</dbReference>
<dbReference type="InterPro" id="IPR036121">
    <property type="entry name" value="ATPase_F1/V1/A1_a/bsu_N_sf"/>
</dbReference>
<dbReference type="InterPro" id="IPR000194">
    <property type="entry name" value="ATPase_F1/V1/A1_a/bsu_nucl-bd"/>
</dbReference>
<dbReference type="InterPro" id="IPR027417">
    <property type="entry name" value="P-loop_NTPase"/>
</dbReference>
<dbReference type="NCBIfam" id="TIGR00962">
    <property type="entry name" value="atpA"/>
    <property type="match status" value="1"/>
</dbReference>
<dbReference type="NCBIfam" id="NF009884">
    <property type="entry name" value="PRK13343.1"/>
    <property type="match status" value="1"/>
</dbReference>
<dbReference type="PANTHER" id="PTHR48082">
    <property type="entry name" value="ATP SYNTHASE SUBUNIT ALPHA, MITOCHONDRIAL"/>
    <property type="match status" value="1"/>
</dbReference>
<dbReference type="PANTHER" id="PTHR48082:SF2">
    <property type="entry name" value="ATP SYNTHASE SUBUNIT ALPHA, MITOCHONDRIAL"/>
    <property type="match status" value="1"/>
</dbReference>
<dbReference type="Pfam" id="PF00006">
    <property type="entry name" value="ATP-synt_ab"/>
    <property type="match status" value="1"/>
</dbReference>
<dbReference type="Pfam" id="PF00306">
    <property type="entry name" value="ATP-synt_ab_C"/>
    <property type="match status" value="1"/>
</dbReference>
<dbReference type="Pfam" id="PF02874">
    <property type="entry name" value="ATP-synt_ab_N"/>
    <property type="match status" value="1"/>
</dbReference>
<dbReference type="PIRSF" id="PIRSF039088">
    <property type="entry name" value="F_ATPase_subunit_alpha"/>
    <property type="match status" value="1"/>
</dbReference>
<dbReference type="SUPFAM" id="SSF47917">
    <property type="entry name" value="C-terminal domain of alpha and beta subunits of F1 ATP synthase"/>
    <property type="match status" value="1"/>
</dbReference>
<dbReference type="SUPFAM" id="SSF50615">
    <property type="entry name" value="N-terminal domain of alpha and beta subunits of F1 ATP synthase"/>
    <property type="match status" value="1"/>
</dbReference>
<dbReference type="SUPFAM" id="SSF52540">
    <property type="entry name" value="P-loop containing nucleoside triphosphate hydrolases"/>
    <property type="match status" value="1"/>
</dbReference>
<dbReference type="PROSITE" id="PS00152">
    <property type="entry name" value="ATPASE_ALPHA_BETA"/>
    <property type="match status" value="1"/>
</dbReference>